<comment type="function">
    <text evidence="2 3">Central component of a redox-sensitive mitochondrial intermembrane space import machinery which is required for the biogenesis of respiratory chain complexes (By similarity). Functions as chaperone and catalyzes the formation of disulfide bonds in substrate proteins, such as COX17 or MICU1. Required for the import and folding of small cysteine-containing proteins (small Tim) in the mitochondrial intermembrane space (IMS). Precursor proteins to be imported into the IMS are translocated in their reduced form into the mitochondria.</text>
</comment>
<comment type="subunit">
    <text evidence="3">Monomer. Can form homooligomers.</text>
</comment>
<comment type="subcellular location">
    <subcellularLocation>
        <location evidence="3">Mitochondrion intermembrane space</location>
    </subcellularLocation>
</comment>
<comment type="domain">
    <text evidence="1">The CHCH domain contains a conserved twin Cys-X(9)-Cys motif which is required for import and stability of MIA40 in mitochondria.</text>
</comment>
<dbReference type="EMBL" id="CR855780">
    <property type="protein sequence ID" value="CAJ83613.1"/>
    <property type="molecule type" value="mRNA"/>
</dbReference>
<dbReference type="EMBL" id="BC059772">
    <property type="protein sequence ID" value="AAH59772.1"/>
    <property type="molecule type" value="mRNA"/>
</dbReference>
<dbReference type="RefSeq" id="NP_988878.1">
    <property type="nucleotide sequence ID" value="NM_203547.1"/>
</dbReference>
<dbReference type="SMR" id="Q6PBC3"/>
<dbReference type="FunCoup" id="Q6PBC3">
    <property type="interactions" value="1060"/>
</dbReference>
<dbReference type="STRING" id="8364.ENSXETP00000030542"/>
<dbReference type="PaxDb" id="8364-ENSXETP00000054090"/>
<dbReference type="DNASU" id="394473"/>
<dbReference type="GeneID" id="394473"/>
<dbReference type="KEGG" id="xtr:394473"/>
<dbReference type="AGR" id="Xenbase:XB-GENE-968362"/>
<dbReference type="CTD" id="131474"/>
<dbReference type="Xenbase" id="XB-GENE-968362">
    <property type="gene designation" value="chchd4"/>
</dbReference>
<dbReference type="eggNOG" id="KOG4149">
    <property type="taxonomic scope" value="Eukaryota"/>
</dbReference>
<dbReference type="HOGENOM" id="CLU_127296_1_0_1"/>
<dbReference type="InParanoid" id="Q6PBC3"/>
<dbReference type="OMA" id="MECAMRT"/>
<dbReference type="OrthoDB" id="7481291at2759"/>
<dbReference type="PhylomeDB" id="Q6PBC3"/>
<dbReference type="TreeFam" id="TF314054"/>
<dbReference type="Proteomes" id="UP000008143">
    <property type="component" value="Chromosome 4"/>
</dbReference>
<dbReference type="Bgee" id="ENSXETG00000025311">
    <property type="expression patterns" value="Expressed in egg cell and 14 other cell types or tissues"/>
</dbReference>
<dbReference type="GO" id="GO:0005758">
    <property type="term" value="C:mitochondrial intermembrane space"/>
    <property type="evidence" value="ECO:0000250"/>
    <property type="project" value="UniProtKB"/>
</dbReference>
<dbReference type="GO" id="GO:0015035">
    <property type="term" value="F:protein-disulfide reductase activity"/>
    <property type="evidence" value="ECO:0000250"/>
    <property type="project" value="UniProtKB"/>
</dbReference>
<dbReference type="GO" id="GO:0160203">
    <property type="term" value="P:mitochondrial disulfide relay system"/>
    <property type="evidence" value="ECO:0000250"/>
    <property type="project" value="UniProtKB"/>
</dbReference>
<dbReference type="GO" id="GO:0033108">
    <property type="term" value="P:mitochondrial respiratory chain complex assembly"/>
    <property type="evidence" value="ECO:0000250"/>
    <property type="project" value="UniProtKB"/>
</dbReference>
<dbReference type="FunFam" id="1.10.287.2900:FF:000001">
    <property type="entry name" value="mitochondrial intermembrane space import and assembly protein 40"/>
    <property type="match status" value="1"/>
</dbReference>
<dbReference type="Gene3D" id="1.10.287.2900">
    <property type="match status" value="1"/>
</dbReference>
<dbReference type="InterPro" id="IPR010625">
    <property type="entry name" value="CHCH"/>
</dbReference>
<dbReference type="InterPro" id="IPR039289">
    <property type="entry name" value="CHCHD4"/>
</dbReference>
<dbReference type="PANTHER" id="PTHR21622">
    <property type="entry name" value="COILED-COIL-HELIX-COILED-COIL-HELIX DOMAIN CONTAINING 4"/>
    <property type="match status" value="1"/>
</dbReference>
<dbReference type="PANTHER" id="PTHR21622:SF0">
    <property type="entry name" value="COILED-COIL-HELIX-COILED-COIL-HELIX DOMAIN CONTAINING 4"/>
    <property type="match status" value="1"/>
</dbReference>
<dbReference type="Pfam" id="PF06747">
    <property type="entry name" value="CHCH"/>
    <property type="match status" value="1"/>
</dbReference>
<dbReference type="PROSITE" id="PS51808">
    <property type="entry name" value="CHCH"/>
    <property type="match status" value="1"/>
</dbReference>
<reference key="1">
    <citation type="submission" date="2006-03" db="EMBL/GenBank/DDBJ databases">
        <authorList>
            <consortium name="Sanger Xenopus tropicalis EST/cDNA project"/>
        </authorList>
    </citation>
    <scope>NUCLEOTIDE SEQUENCE [LARGE SCALE MRNA]</scope>
    <source>
        <tissue>Gastrula</tissue>
    </source>
</reference>
<reference key="2">
    <citation type="submission" date="2003-10" db="EMBL/GenBank/DDBJ databases">
        <authorList>
            <consortium name="NIH - Xenopus Gene Collection (XGC) project"/>
        </authorList>
    </citation>
    <scope>NUCLEOTIDE SEQUENCE [LARGE SCALE MRNA]</scope>
    <source>
        <tissue>Embryo</tissue>
    </source>
</reference>
<gene>
    <name type="primary">chchd4</name>
    <name type="synonym">mia40</name>
    <name type="ORF">TGas084k15.1</name>
</gene>
<keyword id="KW-1015">Disulfide bond</keyword>
<keyword id="KW-0496">Mitochondrion</keyword>
<keyword id="KW-0560">Oxidoreductase</keyword>
<keyword id="KW-0653">Protein transport</keyword>
<keyword id="KW-0676">Redox-active center</keyword>
<keyword id="KW-1185">Reference proteome</keyword>
<keyword id="KW-0811">Translocation</keyword>
<keyword id="KW-0813">Transport</keyword>
<proteinExistence type="evidence at transcript level"/>
<evidence type="ECO:0000250" key="1"/>
<evidence type="ECO:0000250" key="2">
    <source>
        <dbReference type="UniProtKB" id="Q2KHZ4"/>
    </source>
</evidence>
<evidence type="ECO:0000250" key="3">
    <source>
        <dbReference type="UniProtKB" id="Q8N4Q1"/>
    </source>
</evidence>
<evidence type="ECO:0000255" key="4">
    <source>
        <dbReference type="PROSITE-ProRule" id="PRU01150"/>
    </source>
</evidence>
<evidence type="ECO:0000256" key="5">
    <source>
        <dbReference type="SAM" id="MobiDB-lite"/>
    </source>
</evidence>
<name>MIA40_XENTR</name>
<protein>
    <recommendedName>
        <fullName>Mitochondrial intermembrane space import and assembly protein 40</fullName>
    </recommendedName>
    <alternativeName>
        <fullName>Coiled-coil-helix-coiled-coil-helix domain-containing protein 4</fullName>
    </alternativeName>
</protein>
<accession>Q6PBC3</accession>
<organism>
    <name type="scientific">Xenopus tropicalis</name>
    <name type="common">Western clawed frog</name>
    <name type="synonym">Silurana tropicalis</name>
    <dbReference type="NCBI Taxonomy" id="8364"/>
    <lineage>
        <taxon>Eukaryota</taxon>
        <taxon>Metazoa</taxon>
        <taxon>Chordata</taxon>
        <taxon>Craniata</taxon>
        <taxon>Vertebrata</taxon>
        <taxon>Euteleostomi</taxon>
        <taxon>Amphibia</taxon>
        <taxon>Batrachia</taxon>
        <taxon>Anura</taxon>
        <taxon>Pipoidea</taxon>
        <taxon>Pipidae</taxon>
        <taxon>Xenopodinae</taxon>
        <taxon>Xenopus</taxon>
        <taxon>Silurana</taxon>
    </lineage>
</organism>
<feature type="chain" id="PRO_0000235281" description="Mitochondrial intermembrane space import and assembly protein 40">
    <location>
        <begin position="1"/>
        <end position="139"/>
    </location>
</feature>
<feature type="domain" description="CHCH" evidence="4">
    <location>
        <begin position="61"/>
        <end position="105"/>
    </location>
</feature>
<feature type="region of interest" description="Disordered" evidence="5">
    <location>
        <begin position="102"/>
        <end position="139"/>
    </location>
</feature>
<feature type="short sequence motif" description="Cx9C motif 1" evidence="4">
    <location>
        <begin position="64"/>
        <end position="74"/>
    </location>
</feature>
<feature type="short sequence motif" description="Cx9C motif 2" evidence="4">
    <location>
        <begin position="87"/>
        <end position="97"/>
    </location>
</feature>
<feature type="compositionally biased region" description="Basic and acidic residues" evidence="5">
    <location>
        <begin position="115"/>
        <end position="124"/>
    </location>
</feature>
<feature type="disulfide bond" description="Redox-active" evidence="3">
    <location>
        <begin position="53"/>
        <end position="55"/>
    </location>
</feature>
<feature type="disulfide bond" evidence="4">
    <location>
        <begin position="64"/>
        <end position="97"/>
    </location>
</feature>
<feature type="disulfide bond" evidence="4">
    <location>
        <begin position="74"/>
        <end position="87"/>
    </location>
</feature>
<sequence length="139" mass="15712">MSYCRQEGKDKIIFVTKEDHETPSSAELIADDPNDPYEDHGLILPNGDINWNCPCLGGMASGPCGEQFKSAFSCFHYSQEEIKGSDCLDQFRAMQECMQKYPDIYPQEDDEDEAEKEKQNKEAEAFSTETSDTKEESSS</sequence>